<feature type="transit peptide" description="Mitochondrion">
    <location>
        <begin position="1"/>
        <end position="24"/>
    </location>
</feature>
<feature type="chain" id="PRO_0000003600" description="Cytochrome P450 11B2, mitochondrial">
    <location>
        <begin position="25"/>
        <end position="500"/>
    </location>
</feature>
<feature type="binding site" evidence="2">
    <location>
        <position position="381"/>
    </location>
    <ligand>
        <name>21-hydroxyprogesterone</name>
        <dbReference type="ChEBI" id="CHEBI:16973"/>
    </ligand>
</feature>
<feature type="binding site" description="axial binding residue" evidence="2">
    <location>
        <position position="447"/>
    </location>
    <ligand>
        <name>heme</name>
        <dbReference type="ChEBI" id="CHEBI:30413"/>
    </ligand>
    <ligandPart>
        <name>Fe</name>
        <dbReference type="ChEBI" id="CHEBI:18248"/>
    </ligandPart>
</feature>
<feature type="sequence conflict" description="In Ref. 1; AAB21517." evidence="4" ref="1">
    <original>S</original>
    <variation>E</variation>
    <location>
        <position position="491"/>
    </location>
</feature>
<accession>P15539</accession>
<accession>Q14AB5</accession>
<accession>Q64661</accession>
<proteinExistence type="evidence at transcript level"/>
<organism>
    <name type="scientific">Mus musculus</name>
    <name type="common">Mouse</name>
    <dbReference type="NCBI Taxonomy" id="10090"/>
    <lineage>
        <taxon>Eukaryota</taxon>
        <taxon>Metazoa</taxon>
        <taxon>Chordata</taxon>
        <taxon>Craniata</taxon>
        <taxon>Vertebrata</taxon>
        <taxon>Euteleostomi</taxon>
        <taxon>Mammalia</taxon>
        <taxon>Eutheria</taxon>
        <taxon>Euarchontoglires</taxon>
        <taxon>Glires</taxon>
        <taxon>Rodentia</taxon>
        <taxon>Myomorpha</taxon>
        <taxon>Muroidea</taxon>
        <taxon>Muridae</taxon>
        <taxon>Murinae</taxon>
        <taxon>Mus</taxon>
        <taxon>Mus</taxon>
    </lineage>
</organism>
<dbReference type="EC" id="1.14.15.5" evidence="2"/>
<dbReference type="EC" id="1.14.15.4" evidence="2"/>
<dbReference type="EMBL" id="S85260">
    <property type="protein sequence ID" value="AAB21517.2"/>
    <property type="molecule type" value="Genomic_DNA"/>
</dbReference>
<dbReference type="EMBL" id="BC116908">
    <property type="protein sequence ID" value="AAI16909.1"/>
    <property type="molecule type" value="mRNA"/>
</dbReference>
<dbReference type="EMBL" id="BC119321">
    <property type="protein sequence ID" value="AAI19322.1"/>
    <property type="molecule type" value="mRNA"/>
</dbReference>
<dbReference type="EMBL" id="J04451">
    <property type="protein sequence ID" value="AAA50299.1"/>
    <property type="molecule type" value="Genomic_DNA"/>
</dbReference>
<dbReference type="CCDS" id="CCDS27536.3"/>
<dbReference type="PIR" id="A41552">
    <property type="entry name" value="A41552"/>
</dbReference>
<dbReference type="RefSeq" id="NP_034121.4">
    <property type="nucleotide sequence ID" value="NM_009991.4"/>
</dbReference>
<dbReference type="SMR" id="P15539"/>
<dbReference type="FunCoup" id="P15539">
    <property type="interactions" value="253"/>
</dbReference>
<dbReference type="STRING" id="10090.ENSMUSP00000131503"/>
<dbReference type="BindingDB" id="P15539"/>
<dbReference type="ChEMBL" id="CHEMBL3621020"/>
<dbReference type="DrugCentral" id="P15539"/>
<dbReference type="PhosphoSitePlus" id="P15539"/>
<dbReference type="PaxDb" id="10090-ENSMUSP00000131503"/>
<dbReference type="ProteomicsDB" id="273851"/>
<dbReference type="DNASU" id="13072"/>
<dbReference type="Ensembl" id="ENSMUST00000238900.3">
    <property type="protein sequence ID" value="ENSMUSP00000158954.2"/>
    <property type="gene ID" value="ENSMUSG00000022589.10"/>
</dbReference>
<dbReference type="GeneID" id="13072"/>
<dbReference type="KEGG" id="mmu:13072"/>
<dbReference type="AGR" id="MGI:88584"/>
<dbReference type="CTD" id="1585"/>
<dbReference type="MGI" id="MGI:88584">
    <property type="gene designation" value="Cyp11b2"/>
</dbReference>
<dbReference type="VEuPathDB" id="HostDB:ENSMUSG00000022589"/>
<dbReference type="eggNOG" id="KOG0159">
    <property type="taxonomic scope" value="Eukaryota"/>
</dbReference>
<dbReference type="GeneTree" id="ENSGT00940000161506"/>
<dbReference type="InParanoid" id="P15539"/>
<dbReference type="OMA" id="RMGINSW"/>
<dbReference type="OrthoDB" id="3945418at2759"/>
<dbReference type="PhylomeDB" id="P15539"/>
<dbReference type="Reactome" id="R-MMU-193993">
    <property type="pathway name" value="Mineralocorticoid biosynthesis"/>
</dbReference>
<dbReference type="Reactome" id="R-MMU-194002">
    <property type="pathway name" value="Glucocorticoid biosynthesis"/>
</dbReference>
<dbReference type="Reactome" id="R-MMU-211976">
    <property type="pathway name" value="Endogenous sterols"/>
</dbReference>
<dbReference type="BioGRID-ORCS" id="13072">
    <property type="hits" value="9 hits in 79 CRISPR screens"/>
</dbReference>
<dbReference type="PRO" id="PR:P15539"/>
<dbReference type="Proteomes" id="UP000000589">
    <property type="component" value="Chromosome 15"/>
</dbReference>
<dbReference type="RNAct" id="P15539">
    <property type="molecule type" value="protein"/>
</dbReference>
<dbReference type="Bgee" id="ENSMUSG00000022589">
    <property type="expression patterns" value="Expressed in adrenal gland and 20 other cell types or tissues"/>
</dbReference>
<dbReference type="ExpressionAtlas" id="P15539">
    <property type="expression patterns" value="baseline and differential"/>
</dbReference>
<dbReference type="GO" id="GO:0005743">
    <property type="term" value="C:mitochondrial inner membrane"/>
    <property type="evidence" value="ECO:0007669"/>
    <property type="project" value="UniProtKB-SubCell"/>
</dbReference>
<dbReference type="GO" id="GO:0005739">
    <property type="term" value="C:mitochondrion"/>
    <property type="evidence" value="ECO:0007005"/>
    <property type="project" value="MGI"/>
</dbReference>
<dbReference type="GO" id="GO:0047783">
    <property type="term" value="F:corticosterone 18-monooxygenase activity"/>
    <property type="evidence" value="ECO:0007669"/>
    <property type="project" value="UniProtKB-EC"/>
</dbReference>
<dbReference type="GO" id="GO:0020037">
    <property type="term" value="F:heme binding"/>
    <property type="evidence" value="ECO:0000250"/>
    <property type="project" value="UniProtKB"/>
</dbReference>
<dbReference type="GO" id="GO:0005506">
    <property type="term" value="F:iron ion binding"/>
    <property type="evidence" value="ECO:0007669"/>
    <property type="project" value="InterPro"/>
</dbReference>
<dbReference type="GO" id="GO:0004507">
    <property type="term" value="F:steroid 11-beta-monooxygenase activity"/>
    <property type="evidence" value="ECO:0000314"/>
    <property type="project" value="MGI"/>
</dbReference>
<dbReference type="GO" id="GO:0032342">
    <property type="term" value="P:aldosterone biosynthetic process"/>
    <property type="evidence" value="ECO:0000314"/>
    <property type="project" value="MGI"/>
</dbReference>
<dbReference type="GO" id="GO:0042756">
    <property type="term" value="P:drinking behavior"/>
    <property type="evidence" value="ECO:0000315"/>
    <property type="project" value="MGI"/>
</dbReference>
<dbReference type="GO" id="GO:0050801">
    <property type="term" value="P:monoatomic ion homeostasis"/>
    <property type="evidence" value="ECO:0000315"/>
    <property type="project" value="MGI"/>
</dbReference>
<dbReference type="GO" id="GO:0002017">
    <property type="term" value="P:regulation of blood volume by renal aldosterone"/>
    <property type="evidence" value="ECO:0000315"/>
    <property type="project" value="MGI"/>
</dbReference>
<dbReference type="GO" id="GO:0001991">
    <property type="term" value="P:regulation of systemic arterial blood pressure by circulatory renin-angiotensin"/>
    <property type="evidence" value="ECO:0000315"/>
    <property type="project" value="MGI"/>
</dbReference>
<dbReference type="FunFam" id="1.10.630.10:FF:000015">
    <property type="entry name" value="Cholesterol side-chain cleavage enzyme, mitochondrial"/>
    <property type="match status" value="1"/>
</dbReference>
<dbReference type="Gene3D" id="1.10.630.10">
    <property type="entry name" value="Cytochrome P450"/>
    <property type="match status" value="1"/>
</dbReference>
<dbReference type="InterPro" id="IPR050479">
    <property type="entry name" value="CYP11_CYP27_families"/>
</dbReference>
<dbReference type="InterPro" id="IPR001128">
    <property type="entry name" value="Cyt_P450"/>
</dbReference>
<dbReference type="InterPro" id="IPR017972">
    <property type="entry name" value="Cyt_P450_CS"/>
</dbReference>
<dbReference type="InterPro" id="IPR002399">
    <property type="entry name" value="Cyt_P450_mitochondrial"/>
</dbReference>
<dbReference type="InterPro" id="IPR036396">
    <property type="entry name" value="Cyt_P450_sf"/>
</dbReference>
<dbReference type="PANTHER" id="PTHR24279">
    <property type="entry name" value="CYTOCHROME P450"/>
    <property type="match status" value="1"/>
</dbReference>
<dbReference type="PANTHER" id="PTHR24279:SF1">
    <property type="entry name" value="CYTOCHROME P450 11B2, MITOCHONDRIAL"/>
    <property type="match status" value="1"/>
</dbReference>
<dbReference type="Pfam" id="PF00067">
    <property type="entry name" value="p450"/>
    <property type="match status" value="1"/>
</dbReference>
<dbReference type="PRINTS" id="PR00408">
    <property type="entry name" value="MITP450"/>
</dbReference>
<dbReference type="PRINTS" id="PR00385">
    <property type="entry name" value="P450"/>
</dbReference>
<dbReference type="SUPFAM" id="SSF48264">
    <property type="entry name" value="Cytochrome P450"/>
    <property type="match status" value="1"/>
</dbReference>
<dbReference type="PROSITE" id="PS00086">
    <property type="entry name" value="CYTOCHROME_P450"/>
    <property type="match status" value="1"/>
</dbReference>
<keyword id="KW-0349">Heme</keyword>
<keyword id="KW-0408">Iron</keyword>
<keyword id="KW-0472">Membrane</keyword>
<keyword id="KW-0479">Metal-binding</keyword>
<keyword id="KW-0496">Mitochondrion</keyword>
<keyword id="KW-0999">Mitochondrion inner membrane</keyword>
<keyword id="KW-0503">Monooxygenase</keyword>
<keyword id="KW-0560">Oxidoreductase</keyword>
<keyword id="KW-1185">Reference proteome</keyword>
<keyword id="KW-0755">Steroidogenesis</keyword>
<keyword id="KW-0809">Transit peptide</keyword>
<gene>
    <name type="primary">Cyp11b2</name>
    <name type="synonym">Cyp11b-2</name>
</gene>
<evidence type="ECO:0000250" key="1">
    <source>
        <dbReference type="UniProtKB" id="P14137"/>
    </source>
</evidence>
<evidence type="ECO:0000250" key="2">
    <source>
        <dbReference type="UniProtKB" id="P19099"/>
    </source>
</evidence>
<evidence type="ECO:0000250" key="3">
    <source>
        <dbReference type="UniProtKB" id="P30099"/>
    </source>
</evidence>
<evidence type="ECO:0000305" key="4"/>
<name>C11B2_MOUSE</name>
<comment type="function">
    <text evidence="2">A cytochrome P450 monooxygenase that catalyzes the biosynthesis of aldosterone, the main mineralocorticoid in the human body responsible for salt and water homeostasis, thus involved in blood pressure regulation, arterial hypertension, and the development of heart failure. Catalyzes three sequential oxidative reactions of 11-deoxycorticosterone (21-hydroxyprogesterone), namely 11-beta hydroxylation, followed by two successive oxidations at C18 yielding 18-hydroxy and then 18-oxo intermediates (that would not leave the enzyme active site during the consecutive hydroxylation reactions), ending with the formation of aldosterone. Can also produce 18-hydroxycortisol and 18-oxocortisol, derived from successive oxidations of cortisol at C18, normally found at very low levels, but significantly increased in primary aldosteronism, the most common form of secondary hypertension. Mechanistically, uses molecular oxygen inserting one oxygen atom into a substrate and reducing the second into a water molecule. Two electrons are provided by NADPH via a two-protein mitochondrial transfer system comprising flavoprotein FDXR (adrenodoxin/ferredoxin reductase) and nonheme iron-sulfur protein FDX1 or FDX2 (adrenodoxin/ferredoxin). Could also be involved in the androgen metabolic pathway.</text>
</comment>
<comment type="catalytic activity">
    <reaction evidence="2">
        <text>a steroid + 2 reduced [adrenodoxin] + O2 + 2 H(+) = an 11beta-hydroxysteroid + 2 oxidized [adrenodoxin] + H2O</text>
        <dbReference type="Rhea" id="RHEA:15629"/>
        <dbReference type="Rhea" id="RHEA-COMP:9998"/>
        <dbReference type="Rhea" id="RHEA-COMP:9999"/>
        <dbReference type="ChEBI" id="CHEBI:15377"/>
        <dbReference type="ChEBI" id="CHEBI:15378"/>
        <dbReference type="ChEBI" id="CHEBI:15379"/>
        <dbReference type="ChEBI" id="CHEBI:33737"/>
        <dbReference type="ChEBI" id="CHEBI:33738"/>
        <dbReference type="ChEBI" id="CHEBI:35341"/>
        <dbReference type="ChEBI" id="CHEBI:35346"/>
        <dbReference type="EC" id="1.14.15.4"/>
    </reaction>
    <physiologicalReaction direction="left-to-right" evidence="2">
        <dbReference type="Rhea" id="RHEA:15630"/>
    </physiologicalReaction>
</comment>
<comment type="catalytic activity">
    <reaction evidence="2">
        <text>21-hydroxyprogesterone + 2 reduced [adrenodoxin] + O2 + 2 H(+) = corticosterone + 2 oxidized [adrenodoxin] + H2O</text>
        <dbReference type="Rhea" id="RHEA:46104"/>
        <dbReference type="Rhea" id="RHEA-COMP:9998"/>
        <dbReference type="Rhea" id="RHEA-COMP:9999"/>
        <dbReference type="ChEBI" id="CHEBI:15377"/>
        <dbReference type="ChEBI" id="CHEBI:15378"/>
        <dbReference type="ChEBI" id="CHEBI:15379"/>
        <dbReference type="ChEBI" id="CHEBI:16827"/>
        <dbReference type="ChEBI" id="CHEBI:16973"/>
        <dbReference type="ChEBI" id="CHEBI:33737"/>
        <dbReference type="ChEBI" id="CHEBI:33738"/>
    </reaction>
    <physiologicalReaction direction="left-to-right" evidence="2">
        <dbReference type="Rhea" id="RHEA:46105"/>
    </physiologicalReaction>
</comment>
<comment type="catalytic activity">
    <reaction evidence="2">
        <text>corticosterone + 2 reduced [adrenodoxin] + O2 + 2 H(+) = 18-hydroxycorticosterone + 2 oxidized [adrenodoxin] + H2O</text>
        <dbReference type="Rhea" id="RHEA:11872"/>
        <dbReference type="Rhea" id="RHEA-COMP:9998"/>
        <dbReference type="Rhea" id="RHEA-COMP:9999"/>
        <dbReference type="ChEBI" id="CHEBI:15377"/>
        <dbReference type="ChEBI" id="CHEBI:15378"/>
        <dbReference type="ChEBI" id="CHEBI:15379"/>
        <dbReference type="ChEBI" id="CHEBI:16485"/>
        <dbReference type="ChEBI" id="CHEBI:16827"/>
        <dbReference type="ChEBI" id="CHEBI:33737"/>
        <dbReference type="ChEBI" id="CHEBI:33738"/>
        <dbReference type="EC" id="1.14.15.5"/>
    </reaction>
    <physiologicalReaction direction="left-to-right" evidence="2">
        <dbReference type="Rhea" id="RHEA:11873"/>
    </physiologicalReaction>
</comment>
<comment type="catalytic activity">
    <reaction evidence="2">
        <text>18-hydroxycorticosterone + 2 reduced [adrenodoxin] + O2 + 2 H(+) = aldosterone + 2 oxidized [adrenodoxin] + 2 H2O</text>
        <dbReference type="Rhea" id="RHEA:50792"/>
        <dbReference type="Rhea" id="RHEA-COMP:9998"/>
        <dbReference type="Rhea" id="RHEA-COMP:9999"/>
        <dbReference type="ChEBI" id="CHEBI:15377"/>
        <dbReference type="ChEBI" id="CHEBI:15378"/>
        <dbReference type="ChEBI" id="CHEBI:15379"/>
        <dbReference type="ChEBI" id="CHEBI:16485"/>
        <dbReference type="ChEBI" id="CHEBI:27584"/>
        <dbReference type="ChEBI" id="CHEBI:33737"/>
        <dbReference type="ChEBI" id="CHEBI:33738"/>
    </reaction>
    <physiologicalReaction direction="left-to-right" evidence="2">
        <dbReference type="Rhea" id="RHEA:50793"/>
    </physiologicalReaction>
</comment>
<comment type="catalytic activity">
    <reaction evidence="2">
        <text>11-deoxycortisol + 2 reduced [adrenodoxin] + O2 + 2 H(+) = cortisol + 2 oxidized [adrenodoxin] + H2O</text>
        <dbReference type="Rhea" id="RHEA:46100"/>
        <dbReference type="Rhea" id="RHEA-COMP:9998"/>
        <dbReference type="Rhea" id="RHEA-COMP:9999"/>
        <dbReference type="ChEBI" id="CHEBI:15377"/>
        <dbReference type="ChEBI" id="CHEBI:15378"/>
        <dbReference type="ChEBI" id="CHEBI:15379"/>
        <dbReference type="ChEBI" id="CHEBI:17650"/>
        <dbReference type="ChEBI" id="CHEBI:28324"/>
        <dbReference type="ChEBI" id="CHEBI:33737"/>
        <dbReference type="ChEBI" id="CHEBI:33738"/>
    </reaction>
    <physiologicalReaction direction="left-to-right" evidence="2">
        <dbReference type="Rhea" id="RHEA:46101"/>
    </physiologicalReaction>
</comment>
<comment type="catalytic activity">
    <reaction evidence="3">
        <text>21-hydroxyprogesterone + 2 reduced [adrenodoxin] + O2 + 2 H(+) = 18-hydroxy-11-deoxycorticosterone + 2 oxidized [adrenodoxin] + H2O</text>
        <dbReference type="Rhea" id="RHEA:76151"/>
        <dbReference type="Rhea" id="RHEA-COMP:9998"/>
        <dbReference type="Rhea" id="RHEA-COMP:9999"/>
        <dbReference type="ChEBI" id="CHEBI:15377"/>
        <dbReference type="ChEBI" id="CHEBI:15378"/>
        <dbReference type="ChEBI" id="CHEBI:15379"/>
        <dbReference type="ChEBI" id="CHEBI:16973"/>
        <dbReference type="ChEBI" id="CHEBI:33737"/>
        <dbReference type="ChEBI" id="CHEBI:33738"/>
        <dbReference type="ChEBI" id="CHEBI:195166"/>
    </reaction>
    <physiologicalReaction direction="left-to-right" evidence="3">
        <dbReference type="Rhea" id="RHEA:76152"/>
    </physiologicalReaction>
</comment>
<comment type="catalytic activity">
    <reaction evidence="2">
        <text>cortisol + 2 reduced [adrenodoxin] + O2 + 2 H(+) = 18-hydroxycortisol + 2 oxidized [adrenodoxin] + H2O</text>
        <dbReference type="Rhea" id="RHEA:76019"/>
        <dbReference type="Rhea" id="RHEA-COMP:9998"/>
        <dbReference type="Rhea" id="RHEA-COMP:9999"/>
        <dbReference type="ChEBI" id="CHEBI:15377"/>
        <dbReference type="ChEBI" id="CHEBI:15378"/>
        <dbReference type="ChEBI" id="CHEBI:15379"/>
        <dbReference type="ChEBI" id="CHEBI:17650"/>
        <dbReference type="ChEBI" id="CHEBI:33737"/>
        <dbReference type="ChEBI" id="CHEBI:33738"/>
        <dbReference type="ChEBI" id="CHEBI:89455"/>
    </reaction>
    <physiologicalReaction direction="left-to-right" evidence="2">
        <dbReference type="Rhea" id="RHEA:76020"/>
    </physiologicalReaction>
</comment>
<comment type="catalytic activity">
    <reaction evidence="2">
        <text>18-hydroxycortisol + 2 reduced [adrenodoxin] + O2 + 2 H(+) = 18-oxocortisol + 2 oxidized [adrenodoxin] + 2 H2O</text>
        <dbReference type="Rhea" id="RHEA:76023"/>
        <dbReference type="Rhea" id="RHEA-COMP:9998"/>
        <dbReference type="Rhea" id="RHEA-COMP:9999"/>
        <dbReference type="ChEBI" id="CHEBI:15377"/>
        <dbReference type="ChEBI" id="CHEBI:15378"/>
        <dbReference type="ChEBI" id="CHEBI:15379"/>
        <dbReference type="ChEBI" id="CHEBI:33737"/>
        <dbReference type="ChEBI" id="CHEBI:33738"/>
        <dbReference type="ChEBI" id="CHEBI:89213"/>
        <dbReference type="ChEBI" id="CHEBI:89455"/>
    </reaction>
    <physiologicalReaction direction="left-to-right" evidence="2">
        <dbReference type="Rhea" id="RHEA:76024"/>
    </physiologicalReaction>
</comment>
<comment type="cofactor">
    <cofactor evidence="2">
        <name>heme</name>
        <dbReference type="ChEBI" id="CHEBI:30413"/>
    </cofactor>
</comment>
<comment type="pathway">
    <text evidence="2">Steroid biosynthesis.</text>
</comment>
<comment type="subcellular location">
    <subcellularLocation>
        <location evidence="1">Mitochondrion inner membrane</location>
        <topology evidence="1">Peripheral membrane protein</topology>
    </subcellularLocation>
</comment>
<comment type="similarity">
    <text evidence="4">Belongs to the cytochrome P450 family.</text>
</comment>
<sequence>MALRVTADVWLARPWQCLHRTRALGTTATLAPKTLQPFEAIPQYSRNKWLKMIQILREQGQENLHLEMHQVFRELGPIFRHSVGKTQIVSVMLPEDAEKLHQVESMLPRRMHLEPWVAHRELRGLRRGVFLLNGPEWRLNRLRLNRNVLSPKAVQKFVPMVDMVARDFLETLKEKVLQNARGSLTMDVQQSLFNYTIEASNFALFGERLGLLGHDLSPGSLKFIHALHSMFKSTSQLLFLPKSLTRWTSTRVWKEHFDAWDVISEYANRCIWKVHQELRLGSSQTYSGIVAELISQGSLPLDAIKANSMELTAGSVDTTAIPLVMTLFELARNPDVQKALRQESLAAEASIAANPQKAMSDLPLLRAALKETLRLYPVGGFLERILSSDLVLQNYHVPAGTLVLLYLYSMGRNPAVFPRPERYMPQRWLERKRSFQHLAFGFGVRQCLGRRLAEVEMMLLLHHILKTFQVETLRQEDVQMAYRFVLMPSSSPVLTFRPVS</sequence>
<reference key="1">
    <citation type="journal article" date="1991" name="Mol. Endocrinol.">
        <title>Different isozymes of mouse 11 beta-hydroxylase produce mineralocorticoids and glucocorticoids.</title>
        <authorList>
            <person name="Domalik L.J."/>
            <person name="Chaplin D.D."/>
            <person name="Kirkman M.S."/>
            <person name="Wu R.C."/>
            <person name="Liu W."/>
            <person name="Howard T.A."/>
            <person name="Seldin M.F."/>
            <person name="Parker K.L."/>
        </authorList>
    </citation>
    <scope>NUCLEOTIDE SEQUENCE [GENOMIC DNA]</scope>
</reference>
<reference key="2">
    <citation type="journal article" date="2004" name="Genome Res.">
        <title>The status, quality, and expansion of the NIH full-length cDNA project: the Mammalian Gene Collection (MGC).</title>
        <authorList>
            <consortium name="The MGC Project Team"/>
        </authorList>
    </citation>
    <scope>NUCLEOTIDE SEQUENCE [LARGE SCALE MRNA]</scope>
    <source>
        <tissue>Brain</tissue>
    </source>
</reference>
<reference key="3">
    <citation type="journal article" date="1989" name="J. Biol. Chem.">
        <title>Structural and functional analysis of the promoter region of the gene encoding mouse steroid 11 beta-hydroxylase.</title>
        <authorList>
            <person name="Mouw A.R."/>
            <person name="Rice D.A."/>
            <person name="Meade J.C."/>
            <person name="Chua S.C."/>
            <person name="White P.C."/>
            <person name="Schimmer B.P."/>
            <person name="Parker K.L."/>
        </authorList>
    </citation>
    <scope>NUCLEOTIDE SEQUENCE [GENOMIC DNA] OF 1-42</scope>
</reference>
<protein>
    <recommendedName>
        <fullName>Cytochrome P450 11B2, mitochondrial</fullName>
    </recommendedName>
    <alternativeName>
        <fullName evidence="2">Aldosterone synthase</fullName>
        <shortName>ALDOS</shortName>
    </alternativeName>
    <alternativeName>
        <fullName>Aldosterone-synthesizing enzyme</fullName>
    </alternativeName>
    <alternativeName>
        <fullName>CYPXIB2</fullName>
    </alternativeName>
    <alternativeName>
        <fullName>Corticosterone 18-monooxygenase, CYP11B2</fullName>
        <ecNumber evidence="2">1.14.15.5</ecNumber>
    </alternativeName>
    <alternativeName>
        <fullName>Cytochrome P-450Aldo</fullName>
    </alternativeName>
    <alternativeName>
        <fullName>Cytochrome P-450C18</fullName>
    </alternativeName>
    <alternativeName>
        <fullName>Cytochrome P450C11</fullName>
    </alternativeName>
    <alternativeName>
        <fullName evidence="2">Steroid 11-beta-hydroxylase, CYP11B2</fullName>
        <ecNumber evidence="2">1.14.15.4</ecNumber>
    </alternativeName>
    <alternativeName>
        <fullName>Steroid 18-hydroxylase</fullName>
    </alternativeName>
</protein>